<name>MNMG_PSEAB</name>
<dbReference type="EMBL" id="CP000438">
    <property type="protein sequence ID" value="ABJ14952.1"/>
    <property type="molecule type" value="Genomic_DNA"/>
</dbReference>
<dbReference type="RefSeq" id="WP_003100244.1">
    <property type="nucleotide sequence ID" value="NZ_CP034244.1"/>
</dbReference>
<dbReference type="SMR" id="Q02DE3"/>
<dbReference type="KEGG" id="pau:PA14_73370"/>
<dbReference type="PseudoCAP" id="PA14_73370"/>
<dbReference type="HOGENOM" id="CLU_007831_2_2_6"/>
<dbReference type="BioCyc" id="PAER208963:G1G74-6172-MONOMER"/>
<dbReference type="Proteomes" id="UP000000653">
    <property type="component" value="Chromosome"/>
</dbReference>
<dbReference type="GO" id="GO:0005829">
    <property type="term" value="C:cytosol"/>
    <property type="evidence" value="ECO:0007669"/>
    <property type="project" value="TreeGrafter"/>
</dbReference>
<dbReference type="GO" id="GO:0050660">
    <property type="term" value="F:flavin adenine dinucleotide binding"/>
    <property type="evidence" value="ECO:0007669"/>
    <property type="project" value="UniProtKB-UniRule"/>
</dbReference>
<dbReference type="GO" id="GO:0030488">
    <property type="term" value="P:tRNA methylation"/>
    <property type="evidence" value="ECO:0007669"/>
    <property type="project" value="TreeGrafter"/>
</dbReference>
<dbReference type="GO" id="GO:0002098">
    <property type="term" value="P:tRNA wobble uridine modification"/>
    <property type="evidence" value="ECO:0007669"/>
    <property type="project" value="InterPro"/>
</dbReference>
<dbReference type="FunFam" id="1.10.10.1800:FF:000001">
    <property type="entry name" value="tRNA uridine 5-carboxymethylaminomethyl modification enzyme MnmG"/>
    <property type="match status" value="1"/>
</dbReference>
<dbReference type="FunFam" id="1.10.150.570:FF:000001">
    <property type="entry name" value="tRNA uridine 5-carboxymethylaminomethyl modification enzyme MnmG"/>
    <property type="match status" value="1"/>
</dbReference>
<dbReference type="FunFam" id="3.50.50.60:FF:000002">
    <property type="entry name" value="tRNA uridine 5-carboxymethylaminomethyl modification enzyme MnmG"/>
    <property type="match status" value="1"/>
</dbReference>
<dbReference type="FunFam" id="3.50.50.60:FF:000010">
    <property type="entry name" value="tRNA uridine 5-carboxymethylaminomethyl modification enzyme MnmG"/>
    <property type="match status" value="1"/>
</dbReference>
<dbReference type="Gene3D" id="3.50.50.60">
    <property type="entry name" value="FAD/NAD(P)-binding domain"/>
    <property type="match status" value="2"/>
</dbReference>
<dbReference type="Gene3D" id="1.10.150.570">
    <property type="entry name" value="GidA associated domain, C-terminal subdomain"/>
    <property type="match status" value="1"/>
</dbReference>
<dbReference type="Gene3D" id="1.10.10.1800">
    <property type="entry name" value="tRNA uridine 5-carboxymethylaminomethyl modification enzyme MnmG/GidA"/>
    <property type="match status" value="1"/>
</dbReference>
<dbReference type="HAMAP" id="MF_00129">
    <property type="entry name" value="MnmG_GidA"/>
    <property type="match status" value="1"/>
</dbReference>
<dbReference type="InterPro" id="IPR036188">
    <property type="entry name" value="FAD/NAD-bd_sf"/>
</dbReference>
<dbReference type="InterPro" id="IPR049312">
    <property type="entry name" value="GIDA_C_N"/>
</dbReference>
<dbReference type="InterPro" id="IPR004416">
    <property type="entry name" value="MnmG"/>
</dbReference>
<dbReference type="InterPro" id="IPR002218">
    <property type="entry name" value="MnmG-rel"/>
</dbReference>
<dbReference type="InterPro" id="IPR020595">
    <property type="entry name" value="MnmG-rel_CS"/>
</dbReference>
<dbReference type="InterPro" id="IPR026904">
    <property type="entry name" value="MnmG_C"/>
</dbReference>
<dbReference type="InterPro" id="IPR047001">
    <property type="entry name" value="MnmG_C_subdom"/>
</dbReference>
<dbReference type="InterPro" id="IPR044920">
    <property type="entry name" value="MnmG_C_subdom_sf"/>
</dbReference>
<dbReference type="InterPro" id="IPR040131">
    <property type="entry name" value="MnmG_N"/>
</dbReference>
<dbReference type="NCBIfam" id="TIGR00136">
    <property type="entry name" value="mnmG_gidA"/>
    <property type="match status" value="1"/>
</dbReference>
<dbReference type="PANTHER" id="PTHR11806">
    <property type="entry name" value="GLUCOSE INHIBITED DIVISION PROTEIN A"/>
    <property type="match status" value="1"/>
</dbReference>
<dbReference type="PANTHER" id="PTHR11806:SF0">
    <property type="entry name" value="PROTEIN MTO1 HOMOLOG, MITOCHONDRIAL"/>
    <property type="match status" value="1"/>
</dbReference>
<dbReference type="Pfam" id="PF01134">
    <property type="entry name" value="GIDA"/>
    <property type="match status" value="1"/>
</dbReference>
<dbReference type="Pfam" id="PF21680">
    <property type="entry name" value="GIDA_C_1st"/>
    <property type="match status" value="1"/>
</dbReference>
<dbReference type="Pfam" id="PF13932">
    <property type="entry name" value="SAM_GIDA_C"/>
    <property type="match status" value="1"/>
</dbReference>
<dbReference type="PRINTS" id="PR00368">
    <property type="entry name" value="FADPNR"/>
</dbReference>
<dbReference type="SMART" id="SM01228">
    <property type="entry name" value="GIDA_assoc_3"/>
    <property type="match status" value="1"/>
</dbReference>
<dbReference type="SUPFAM" id="SSF51905">
    <property type="entry name" value="FAD/NAD(P)-binding domain"/>
    <property type="match status" value="1"/>
</dbReference>
<dbReference type="PROSITE" id="PS01280">
    <property type="entry name" value="GIDA_1"/>
    <property type="match status" value="1"/>
</dbReference>
<dbReference type="PROSITE" id="PS01281">
    <property type="entry name" value="GIDA_2"/>
    <property type="match status" value="1"/>
</dbReference>
<feature type="chain" id="PRO_1000016644" description="tRNA uridine 5-carboxymethylaminomethyl modification enzyme MnmG">
    <location>
        <begin position="1"/>
        <end position="630"/>
    </location>
</feature>
<feature type="binding site" evidence="1">
    <location>
        <begin position="13"/>
        <end position="18"/>
    </location>
    <ligand>
        <name>FAD</name>
        <dbReference type="ChEBI" id="CHEBI:57692"/>
    </ligand>
</feature>
<feature type="binding site" evidence="1">
    <location>
        <begin position="273"/>
        <end position="287"/>
    </location>
    <ligand>
        <name>NAD(+)</name>
        <dbReference type="ChEBI" id="CHEBI:57540"/>
    </ligand>
</feature>
<comment type="function">
    <text evidence="1">NAD-binding protein involved in the addition of a carboxymethylaminomethyl (cmnm) group at the wobble position (U34) of certain tRNAs, forming tRNA-cmnm(5)s(2)U34.</text>
</comment>
<comment type="cofactor">
    <cofactor evidence="1">
        <name>FAD</name>
        <dbReference type="ChEBI" id="CHEBI:57692"/>
    </cofactor>
</comment>
<comment type="subunit">
    <text evidence="1">Homodimer. Heterotetramer of two MnmE and two MnmG subunits.</text>
</comment>
<comment type="subcellular location">
    <subcellularLocation>
        <location evidence="1">Cytoplasm</location>
    </subcellularLocation>
</comment>
<comment type="similarity">
    <text evidence="1">Belongs to the MnmG family.</text>
</comment>
<gene>
    <name evidence="1" type="primary">mnmG</name>
    <name evidence="1" type="synonym">gidA</name>
    <name type="ordered locus">PA14_73370</name>
</gene>
<organism>
    <name type="scientific">Pseudomonas aeruginosa (strain UCBPP-PA14)</name>
    <dbReference type="NCBI Taxonomy" id="208963"/>
    <lineage>
        <taxon>Bacteria</taxon>
        <taxon>Pseudomonadati</taxon>
        <taxon>Pseudomonadota</taxon>
        <taxon>Gammaproteobacteria</taxon>
        <taxon>Pseudomonadales</taxon>
        <taxon>Pseudomonadaceae</taxon>
        <taxon>Pseudomonas</taxon>
    </lineage>
</organism>
<sequence>MDFPTRFDVIVIGGGHAGTEAALAAARMGVKTLLLTHNVETLGQMSCNPAIGGIGKSHLVKEIDALGGAMAEATDKGGIQFRILNSRKGPAVRATRAQADRVLYKAAIRHTLENQPNLWIFQQACDDLIVEQDQVRGVVTQMGLRFHADNVVLTTGTFLGGLIHIGLENYSGGRAGDPPSIALARRLRELPLRVGRLKTGTPPRIDGRSVDFSVMTEQPGDTPIPVMSFLGSKEQHPEQVSCWITHTNARTHEIIAANLDRSPMYSGVIEGIGPRYCPSIEDKIHRFADKESHQVFLEPEGLTTHELYPNGISTSLPFDVQLQIVRSIRGMENAHIVRPGYAIEYDFFDPRDLRYSLETKVIGGLFFAGQINGTTGYEEAGAQGLLAGANAALRSQGKDSWCPRRDEAYIGVLVDDLITLGTQEPYRMFTSRAEYRLILREDNADLRLTEKGRELGLVDDRRWAAFEAKREGIEREEQRLKSTWVRPNTPQGDAIAERFGTPLTHEYNLLNLLSRPEIDYAGLVEITGDAVDNPQVAEQVEIRTKYAGYIDRQQEEIARLRASEDTRLPVDIDYLGISGLSKEIQNKLNQARPETLGQASRIPGVTPAAISLLLIHLKKRASGRQLEQSA</sequence>
<evidence type="ECO:0000255" key="1">
    <source>
        <dbReference type="HAMAP-Rule" id="MF_00129"/>
    </source>
</evidence>
<reference key="1">
    <citation type="journal article" date="2006" name="Genome Biol.">
        <title>Genomic analysis reveals that Pseudomonas aeruginosa virulence is combinatorial.</title>
        <authorList>
            <person name="Lee D.G."/>
            <person name="Urbach J.M."/>
            <person name="Wu G."/>
            <person name="Liberati N.T."/>
            <person name="Feinbaum R.L."/>
            <person name="Miyata S."/>
            <person name="Diggins L.T."/>
            <person name="He J."/>
            <person name="Saucier M."/>
            <person name="Deziel E."/>
            <person name="Friedman L."/>
            <person name="Li L."/>
            <person name="Grills G."/>
            <person name="Montgomery K."/>
            <person name="Kucherlapati R."/>
            <person name="Rahme L.G."/>
            <person name="Ausubel F.M."/>
        </authorList>
    </citation>
    <scope>NUCLEOTIDE SEQUENCE [LARGE SCALE GENOMIC DNA]</scope>
    <source>
        <strain>UCBPP-PA14</strain>
    </source>
</reference>
<accession>Q02DE3</accession>
<protein>
    <recommendedName>
        <fullName evidence="1">tRNA uridine 5-carboxymethylaminomethyl modification enzyme MnmG</fullName>
    </recommendedName>
    <alternativeName>
        <fullName evidence="1">Glucose-inhibited division protein A</fullName>
    </alternativeName>
</protein>
<proteinExistence type="inferred from homology"/>
<keyword id="KW-0963">Cytoplasm</keyword>
<keyword id="KW-0274">FAD</keyword>
<keyword id="KW-0285">Flavoprotein</keyword>
<keyword id="KW-0520">NAD</keyword>
<keyword id="KW-0819">tRNA processing</keyword>